<accession>B1NWT4</accession>
<keyword id="KW-0165">Cleavage on pair of basic residues</keyword>
<keyword id="KW-1015">Disulfide bond</keyword>
<keyword id="KW-0872">Ion channel impairing toxin</keyword>
<keyword id="KW-0166">Nematocyst</keyword>
<keyword id="KW-0528">Neurotoxin</keyword>
<keyword id="KW-0964">Secreted</keyword>
<keyword id="KW-0732">Signal</keyword>
<keyword id="KW-0800">Toxin</keyword>
<keyword id="KW-0738">Voltage-gated sodium channel impairing toxin</keyword>
<dbReference type="EMBL" id="EU124471">
    <property type="protein sequence ID" value="ABW97350.1"/>
    <property type="molecule type" value="mRNA"/>
</dbReference>
<dbReference type="SMR" id="B1NWT4"/>
<dbReference type="GO" id="GO:0005576">
    <property type="term" value="C:extracellular region"/>
    <property type="evidence" value="ECO:0007669"/>
    <property type="project" value="UniProtKB-SubCell"/>
</dbReference>
<dbReference type="GO" id="GO:0042151">
    <property type="term" value="C:nematocyst"/>
    <property type="evidence" value="ECO:0007669"/>
    <property type="project" value="UniProtKB-SubCell"/>
</dbReference>
<dbReference type="GO" id="GO:0090729">
    <property type="term" value="F:toxin activity"/>
    <property type="evidence" value="ECO:0007669"/>
    <property type="project" value="UniProtKB-KW"/>
</dbReference>
<dbReference type="Gene3D" id="2.20.20.10">
    <property type="entry name" value="Anthopleurin-A"/>
    <property type="match status" value="1"/>
</dbReference>
<dbReference type="InterPro" id="IPR023355">
    <property type="entry name" value="Myo_ane_neurotoxin_sf"/>
</dbReference>
<dbReference type="SUPFAM" id="SSF57392">
    <property type="entry name" value="Defensin-like"/>
    <property type="match status" value="1"/>
</dbReference>
<comment type="function">
    <text evidence="6">May affect sodium channels (Nav).</text>
</comment>
<comment type="subcellular location">
    <subcellularLocation>
        <location evidence="6">Secreted</location>
    </subcellularLocation>
    <subcellularLocation>
        <location evidence="6">Nematocyst</location>
    </subcellularLocation>
</comment>
<comment type="similarity">
    <text evidence="6">Belongs to the sea anemone sodium channel inhibitory toxin family. Type I subfamily.</text>
</comment>
<comment type="caution">
    <text evidence="6">Opinions are divided on whether Anemonia viridis (Forsskal, 1775) and Anemonia sulcata (Pennant, 1777) are separate species.</text>
</comment>
<feature type="signal peptide" evidence="3">
    <location>
        <begin position="1"/>
        <end position="21"/>
    </location>
</feature>
<feature type="propeptide" id="PRO_0000433688" evidence="1">
    <location>
        <begin position="22"/>
        <end position="33"/>
    </location>
</feature>
<feature type="chain" id="PRO_5000319678" description="U-actitoxin-Avd7a">
    <location>
        <begin position="36"/>
        <end position="76"/>
    </location>
</feature>
<feature type="disulfide bond" evidence="2">
    <location>
        <begin position="40"/>
        <end position="71"/>
    </location>
</feature>
<feature type="disulfide bond" evidence="2">
    <location>
        <begin position="42"/>
        <end position="63"/>
    </location>
</feature>
<feature type="disulfide bond" evidence="2">
    <location>
        <begin position="56"/>
        <end position="72"/>
    </location>
</feature>
<organism>
    <name type="scientific">Anemonia viridis</name>
    <name type="common">Snakelocks anemone</name>
    <dbReference type="NCBI Taxonomy" id="51769"/>
    <lineage>
        <taxon>Eukaryota</taxon>
        <taxon>Metazoa</taxon>
        <taxon>Cnidaria</taxon>
        <taxon>Anthozoa</taxon>
        <taxon>Hexacorallia</taxon>
        <taxon>Actiniaria</taxon>
        <taxon>Actiniidae</taxon>
        <taxon>Anemonia</taxon>
    </lineage>
</organism>
<sequence length="76" mass="8291">MMNRLLVFVMLGAAFMLVVSAVDQDAYEDVNMLKRGGTPCPCDGESMSGIIWFWSCPAGWRKCGAEWPAPCCKAIG</sequence>
<reference key="1">
    <citation type="journal article" date="2008" name="Mol. Biol. Evol.">
        <title>Concerted evolution of sea anemone neurotoxin genes is revealed through analysis of the Nematostella vectensis genome.</title>
        <authorList>
            <person name="Moran Y."/>
            <person name="Weinberger H."/>
            <person name="Sullivan J.C."/>
            <person name="Reitzel A.M."/>
            <person name="Finnerty J.R."/>
            <person name="Gurevitz M."/>
        </authorList>
    </citation>
    <scope>NUCLEOTIDE SEQUENCE [MRNA]</scope>
</reference>
<reference key="2">
    <citation type="journal article" date="2012" name="Toxicon">
        <title>Development of a rational nomenclature for naming peptide and protein toxins from sea anemones.</title>
        <authorList>
            <person name="Oliveira J.S."/>
            <person name="Fuentes-Silva D."/>
            <person name="King G.F."/>
        </authorList>
    </citation>
    <scope>NOMENCLATURE</scope>
</reference>
<name>NA18_ANEVI</name>
<protein>
    <recommendedName>
        <fullName evidence="5">U-actitoxin-Avd7a</fullName>
        <shortName evidence="5">U-AITX-Avd7a</shortName>
    </recommendedName>
    <alternativeName>
        <fullName evidence="4">Av8</fullName>
    </alternativeName>
    <alternativeName>
        <fullName evidence="7">Neurotoxin 8</fullName>
    </alternativeName>
</protein>
<evidence type="ECO:0000250" key="1"/>
<evidence type="ECO:0000250" key="2">
    <source>
        <dbReference type="UniProtKB" id="P19651"/>
    </source>
</evidence>
<evidence type="ECO:0000255" key="3"/>
<evidence type="ECO:0000303" key="4">
    <source>
    </source>
</evidence>
<evidence type="ECO:0000303" key="5">
    <source>
    </source>
</evidence>
<evidence type="ECO:0000305" key="6"/>
<evidence type="ECO:0000312" key="7">
    <source>
        <dbReference type="EMBL" id="ABW97350.1"/>
    </source>
</evidence>
<proteinExistence type="inferred from homology"/>